<name>KAL1L_HUMAN</name>
<organism>
    <name type="scientific">Homo sapiens</name>
    <name type="common">Human</name>
    <dbReference type="NCBI Taxonomy" id="9606"/>
    <lineage>
        <taxon>Eukaryota</taxon>
        <taxon>Metazoa</taxon>
        <taxon>Chordata</taxon>
        <taxon>Craniata</taxon>
        <taxon>Vertebrata</taxon>
        <taxon>Euteleostomi</taxon>
        <taxon>Mammalia</taxon>
        <taxon>Eutheria</taxon>
        <taxon>Euarchontoglires</taxon>
        <taxon>Primates</taxon>
        <taxon>Haplorrhini</taxon>
        <taxon>Catarrhini</taxon>
        <taxon>Hominidae</taxon>
        <taxon>Homo</taxon>
    </lineage>
</organism>
<comment type="alternative products">
    <event type="alternative splicing"/>
    <isoform>
        <id>A0AUZ9-1</id>
        <name>1</name>
        <sequence type="displayed"/>
    </isoform>
    <isoform>
        <id>A0AUZ9-2</id>
        <name>2</name>
        <sequence type="described" ref="VSP_031499"/>
    </isoform>
    <isoform>
        <id>A0AUZ9-3</id>
        <name>3</name>
        <sequence type="described" ref="VSP_031500 VSP_031501"/>
    </isoform>
    <isoform>
        <id>A0AUZ9-4</id>
        <name>4</name>
        <sequence type="described" ref="VSP_031497 VSP_031498"/>
    </isoform>
</comment>
<comment type="PTM">
    <text evidence="4">Acetylated on lysine residues by KAT8 upon ionizing radiation-induced DNA damage; deacetylated by HDAC3.</text>
</comment>
<comment type="sequence caution" evidence="7">
    <conflict type="erroneous initiation">
        <sequence resource="EMBL-CDS" id="BAB85085"/>
    </conflict>
    <text>Truncated N-terminus.</text>
</comment>
<comment type="sequence caution" evidence="7">
    <conflict type="erroneous termination">
        <sequence resource="EMBL-CDS" id="BAB85085"/>
    </conflict>
    <text>Truncated C-terminus.</text>
</comment>
<comment type="sequence caution" evidence="7">
    <conflict type="frameshift">
        <sequence resource="EMBL-CDS" id="BAB85085"/>
    </conflict>
</comment>
<proteinExistence type="evidence at protein level"/>
<sequence length="987" mass="112253">MTPALREATAKGISFSSLPSTMESDKMLYMESPRTVDEKLKGDTFSQMLGFPTPEPTLNTNFVNLKHFGSPQSSKHYQTVFLMRSNSTLNKHNENYKQKKLGEPSCNKLKNILYNGSNIQLSKICLSHSEEFIKKEPLSDTTSQCMKDVQIILDSNITKDTNVDKVQLQNCKWYQENALLDKVTDAEIKKGLLHCTQKKIVPGHSNVPVSSSAAEKEEEVHARLLHCVSKQKILLSQARRTQKHLQMLLAKHVVKHYGQQMKLSMKHQLPKMKTFHEPTTILGNSLPKCTEIKPEVNTLTAENKLWDDAKNGFARCTAAEIQRFAFSATGLLSHVEEGLDSDATDSSSDDDLDEYTLRKNVAVNCSTEWKWLVDRARVGSRWTWLQAQISDLECKIQQLTDIHRQIRASKGIVVLEECQLPKDILKKQMQFADQAASLNILGNPQVPQECQDPVPEQDFEMSPSSPTLLLRNIEKQSAQLTEIINSLIAPLNLSPTSSPLSSKSCSHKCLANGIYRSASENLDELSSSSSWLLNQKHSKKKRKDRTRLKSSSLTFMSTSARTRPLQSFHKRKLYRLSPTFYWTPQTLPSKETAFLNTTQMPCLQSASTWSSYEHNSESYLLREHVSELDSSFHSVLSLPSDVPLHFHFETLLKKTEIKGNLAENKFVDEYIISPSPVHSTLNQWRNGYSPICKPQIRSESSAQLLQGRKKRHLSETALGERTKLEESDFQHTESGSHSNFTAVSNVNVLSRIQNSSRNTARRRLRSESSYDIDNIVIPMSLVAPAKLEKLQYKEILTPSWRMVVLQPLDEYNLGKEEIEDLSDEVFSLRHKKYEEREQARWSLWEQSKWHRRNSRAYSKNVEGQDLLLKEYPNNFSSSQQCAAASPPGLPSENQDLCAYGLPSLNQSQETKSLWWERRAFPLKGEDMAALLCQDEKKDQVERSSTAFHGEIFGTSVPENGHHPKKQSDGMEEYKTFGLGLTNVKKNR</sequence>
<feature type="chain" id="PRO_0000319582" description="KAT8 regulatory NSL complex subunit 1-like protein">
    <location>
        <begin position="1"/>
        <end position="987"/>
    </location>
</feature>
<feature type="domain" description="PEHE" evidence="2">
    <location>
        <begin position="794"/>
        <end position="915"/>
    </location>
</feature>
<feature type="region of interest" description="Disordered" evidence="3">
    <location>
        <begin position="708"/>
        <end position="738"/>
    </location>
</feature>
<feature type="region of interest" description="Disordered" evidence="3">
    <location>
        <begin position="949"/>
        <end position="972"/>
    </location>
</feature>
<feature type="compositionally biased region" description="Basic and acidic residues" evidence="3">
    <location>
        <begin position="718"/>
        <end position="731"/>
    </location>
</feature>
<feature type="compositionally biased region" description="Basic and acidic residues" evidence="3">
    <location>
        <begin position="959"/>
        <end position="972"/>
    </location>
</feature>
<feature type="modified residue" description="Phosphoserine" evidence="1">
    <location>
        <position position="462"/>
    </location>
</feature>
<feature type="modified residue" description="N6-acetyllysine" evidence="8">
    <location>
        <position position="859"/>
    </location>
</feature>
<feature type="cross-link" description="Glycyl lysine isopeptide (Lys-Gly) (interchain with G-Cter in SUMO2)" evidence="9">
    <location>
        <position position="134"/>
    </location>
</feature>
<feature type="splice variant" id="VSP_031497" description="In isoform 4." evidence="6">
    <original>DVPLHFHF</original>
    <variation>GKPPCNNF</variation>
    <location>
        <begin position="641"/>
        <end position="648"/>
    </location>
</feature>
<feature type="splice variant" id="VSP_031498" description="In isoform 4." evidence="6">
    <location>
        <begin position="649"/>
        <end position="987"/>
    </location>
</feature>
<feature type="splice variant" id="VSP_031499" description="In isoform 2." evidence="6">
    <location>
        <begin position="677"/>
        <end position="718"/>
    </location>
</feature>
<feature type="splice variant" id="VSP_031500" description="In isoform 3." evidence="5 6">
    <original>VHSTLNQWRNGYSPICKPQIRSESSAQLL</original>
    <variation>GMSHLQFLYSICLFMSLYLLFLHSKKNKI</variation>
    <location>
        <begin position="677"/>
        <end position="705"/>
    </location>
</feature>
<feature type="splice variant" id="VSP_031501" description="In isoform 3." evidence="5 6">
    <location>
        <begin position="706"/>
        <end position="987"/>
    </location>
</feature>
<feature type="sequence conflict" description="In Ref. 1; BAB71308." evidence="7" ref="1">
    <original>D</original>
    <variation>G</variation>
    <location>
        <position position="401"/>
    </location>
</feature>
<feature type="sequence conflict" description="In Ref. 1; BAB71308." evidence="7" ref="1">
    <original>D</original>
    <variation>G</variation>
    <location>
        <position position="458"/>
    </location>
</feature>
<feature type="sequence conflict" description="In Ref. 1; BAB85085." evidence="7" ref="1">
    <original>R</original>
    <variation>G</variation>
    <location>
        <position position="471"/>
    </location>
</feature>
<feature type="sequence conflict" description="In Ref. 1; BAB85085." evidence="7" ref="1">
    <original>S</original>
    <variation>F</variation>
    <location>
        <position position="501"/>
    </location>
</feature>
<feature type="sequence conflict" description="In Ref. 5; CAB61379." evidence="7" ref="5">
    <original>L</original>
    <variation>W</variation>
    <location>
        <position position="587"/>
    </location>
</feature>
<feature type="sequence conflict" description="In Ref. 1; BAB71308." evidence="7" ref="1">
    <original>A</original>
    <variation>T</variation>
    <location>
        <position position="606"/>
    </location>
</feature>
<feature type="sequence conflict" description="In Ref. 1; BAB85085." evidence="7" ref="1">
    <original>S</original>
    <variation>I</variation>
    <location>
        <position position="756"/>
    </location>
</feature>
<feature type="sequence conflict" description="In Ref. 1; BAB85085." evidence="7" ref="1">
    <original>K</original>
    <variation>Q</variation>
    <location>
        <position position="848"/>
    </location>
</feature>
<keyword id="KW-0007">Acetylation</keyword>
<keyword id="KW-0025">Alternative splicing</keyword>
<keyword id="KW-1017">Isopeptide bond</keyword>
<keyword id="KW-0597">Phosphoprotein</keyword>
<keyword id="KW-1267">Proteomics identification</keyword>
<keyword id="KW-1185">Reference proteome</keyword>
<keyword id="KW-0832">Ubl conjugation</keyword>
<protein>
    <recommendedName>
        <fullName>KAT8 regulatory NSL complex subunit 1-like protein</fullName>
    </recommendedName>
    <alternativeName>
        <fullName>MSL1v2</fullName>
    </alternativeName>
</protein>
<gene>
    <name type="primary">KANSL1L</name>
    <name type="synonym">C2orf67</name>
</gene>
<evidence type="ECO:0000250" key="1">
    <source>
        <dbReference type="UniProtKB" id="Q5DTI6"/>
    </source>
</evidence>
<evidence type="ECO:0000255" key="2">
    <source>
        <dbReference type="PROSITE-ProRule" id="PRU01397"/>
    </source>
</evidence>
<evidence type="ECO:0000256" key="3">
    <source>
        <dbReference type="SAM" id="MobiDB-lite"/>
    </source>
</evidence>
<evidence type="ECO:0000269" key="4">
    <source>
    </source>
</evidence>
<evidence type="ECO:0000303" key="5">
    <source>
    </source>
</evidence>
<evidence type="ECO:0000303" key="6">
    <source>
    </source>
</evidence>
<evidence type="ECO:0000305" key="7"/>
<evidence type="ECO:0007744" key="8">
    <source>
    </source>
</evidence>
<evidence type="ECO:0007744" key="9">
    <source>
    </source>
</evidence>
<accession>A0AUZ9</accession>
<accession>B7ZLN1</accession>
<accession>I6L9A8</accession>
<accession>Q53TV8</accession>
<accession>Q53TW3</accession>
<accession>Q6IS05</accession>
<accession>Q8TCI1</accession>
<accession>Q96MI0</accession>
<accession>Q9UFC3</accession>
<reference key="1">
    <citation type="journal article" date="2004" name="Nat. Genet.">
        <title>Complete sequencing and characterization of 21,243 full-length human cDNAs.</title>
        <authorList>
            <person name="Ota T."/>
            <person name="Suzuki Y."/>
            <person name="Nishikawa T."/>
            <person name="Otsuki T."/>
            <person name="Sugiyama T."/>
            <person name="Irie R."/>
            <person name="Wakamatsu A."/>
            <person name="Hayashi K."/>
            <person name="Sato H."/>
            <person name="Nagai K."/>
            <person name="Kimura K."/>
            <person name="Makita H."/>
            <person name="Sekine M."/>
            <person name="Obayashi M."/>
            <person name="Nishi T."/>
            <person name="Shibahara T."/>
            <person name="Tanaka T."/>
            <person name="Ishii S."/>
            <person name="Yamamoto J."/>
            <person name="Saito K."/>
            <person name="Kawai Y."/>
            <person name="Isono Y."/>
            <person name="Nakamura Y."/>
            <person name="Nagahari K."/>
            <person name="Murakami K."/>
            <person name="Yasuda T."/>
            <person name="Iwayanagi T."/>
            <person name="Wagatsuma M."/>
            <person name="Shiratori A."/>
            <person name="Sudo H."/>
            <person name="Hosoiri T."/>
            <person name="Kaku Y."/>
            <person name="Kodaira H."/>
            <person name="Kondo H."/>
            <person name="Sugawara M."/>
            <person name="Takahashi M."/>
            <person name="Kanda K."/>
            <person name="Yokoi T."/>
            <person name="Furuya T."/>
            <person name="Kikkawa E."/>
            <person name="Omura Y."/>
            <person name="Abe K."/>
            <person name="Kamihara K."/>
            <person name="Katsuta N."/>
            <person name="Sato K."/>
            <person name="Tanikawa M."/>
            <person name="Yamazaki M."/>
            <person name="Ninomiya K."/>
            <person name="Ishibashi T."/>
            <person name="Yamashita H."/>
            <person name="Murakawa K."/>
            <person name="Fujimori K."/>
            <person name="Tanai H."/>
            <person name="Kimata M."/>
            <person name="Watanabe M."/>
            <person name="Hiraoka S."/>
            <person name="Chiba Y."/>
            <person name="Ishida S."/>
            <person name="Ono Y."/>
            <person name="Takiguchi S."/>
            <person name="Watanabe S."/>
            <person name="Yosida M."/>
            <person name="Hotuta T."/>
            <person name="Kusano J."/>
            <person name="Kanehori K."/>
            <person name="Takahashi-Fujii A."/>
            <person name="Hara H."/>
            <person name="Tanase T.-O."/>
            <person name="Nomura Y."/>
            <person name="Togiya S."/>
            <person name="Komai F."/>
            <person name="Hara R."/>
            <person name="Takeuchi K."/>
            <person name="Arita M."/>
            <person name="Imose N."/>
            <person name="Musashino K."/>
            <person name="Yuuki H."/>
            <person name="Oshima A."/>
            <person name="Sasaki N."/>
            <person name="Aotsuka S."/>
            <person name="Yoshikawa Y."/>
            <person name="Matsunawa H."/>
            <person name="Ichihara T."/>
            <person name="Shiohata N."/>
            <person name="Sano S."/>
            <person name="Moriya S."/>
            <person name="Momiyama H."/>
            <person name="Satoh N."/>
            <person name="Takami S."/>
            <person name="Terashima Y."/>
            <person name="Suzuki O."/>
            <person name="Nakagawa S."/>
            <person name="Senoh A."/>
            <person name="Mizoguchi H."/>
            <person name="Goto Y."/>
            <person name="Shimizu F."/>
            <person name="Wakebe H."/>
            <person name="Hishigaki H."/>
            <person name="Watanabe T."/>
            <person name="Sugiyama A."/>
            <person name="Takemoto M."/>
            <person name="Kawakami B."/>
            <person name="Yamazaki M."/>
            <person name="Watanabe K."/>
            <person name="Kumagai A."/>
            <person name="Itakura S."/>
            <person name="Fukuzumi Y."/>
            <person name="Fujimori Y."/>
            <person name="Komiyama M."/>
            <person name="Tashiro H."/>
            <person name="Tanigami A."/>
            <person name="Fujiwara T."/>
            <person name="Ono T."/>
            <person name="Yamada K."/>
            <person name="Fujii Y."/>
            <person name="Ozaki K."/>
            <person name="Hirao M."/>
            <person name="Ohmori Y."/>
            <person name="Kawabata A."/>
            <person name="Hikiji T."/>
            <person name="Kobatake N."/>
            <person name="Inagaki H."/>
            <person name="Ikema Y."/>
            <person name="Okamoto S."/>
            <person name="Okitani R."/>
            <person name="Kawakami T."/>
            <person name="Noguchi S."/>
            <person name="Itoh T."/>
            <person name="Shigeta K."/>
            <person name="Senba T."/>
            <person name="Matsumura K."/>
            <person name="Nakajima Y."/>
            <person name="Mizuno T."/>
            <person name="Morinaga M."/>
            <person name="Sasaki M."/>
            <person name="Togashi T."/>
            <person name="Oyama M."/>
            <person name="Hata H."/>
            <person name="Watanabe M."/>
            <person name="Komatsu T."/>
            <person name="Mizushima-Sugano J."/>
            <person name="Satoh T."/>
            <person name="Shirai Y."/>
            <person name="Takahashi Y."/>
            <person name="Nakagawa K."/>
            <person name="Okumura K."/>
            <person name="Nagase T."/>
            <person name="Nomura N."/>
            <person name="Kikuchi H."/>
            <person name="Masuho Y."/>
            <person name="Yamashita R."/>
            <person name="Nakai K."/>
            <person name="Yada T."/>
            <person name="Nakamura Y."/>
            <person name="Ohara O."/>
            <person name="Isogai T."/>
            <person name="Sugano S."/>
        </authorList>
    </citation>
    <scope>NUCLEOTIDE SEQUENCE [LARGE SCALE MRNA] (ISOFORM 3)</scope>
    <source>
        <tissue>Lung</tissue>
        <tissue>Prostate</tissue>
    </source>
</reference>
<reference key="2">
    <citation type="journal article" date="2005" name="Nature">
        <title>Generation and annotation of the DNA sequences of human chromosomes 2 and 4.</title>
        <authorList>
            <person name="Hillier L.W."/>
            <person name="Graves T.A."/>
            <person name="Fulton R.S."/>
            <person name="Fulton L.A."/>
            <person name="Pepin K.H."/>
            <person name="Minx P."/>
            <person name="Wagner-McPherson C."/>
            <person name="Layman D."/>
            <person name="Wylie K."/>
            <person name="Sekhon M."/>
            <person name="Becker M.C."/>
            <person name="Fewell G.A."/>
            <person name="Delehaunty K.D."/>
            <person name="Miner T.L."/>
            <person name="Nash W.E."/>
            <person name="Kremitzki C."/>
            <person name="Oddy L."/>
            <person name="Du H."/>
            <person name="Sun H."/>
            <person name="Bradshaw-Cordum H."/>
            <person name="Ali J."/>
            <person name="Carter J."/>
            <person name="Cordes M."/>
            <person name="Harris A."/>
            <person name="Isak A."/>
            <person name="van Brunt A."/>
            <person name="Nguyen C."/>
            <person name="Du F."/>
            <person name="Courtney L."/>
            <person name="Kalicki J."/>
            <person name="Ozersky P."/>
            <person name="Abbott S."/>
            <person name="Armstrong J."/>
            <person name="Belter E.A."/>
            <person name="Caruso L."/>
            <person name="Cedroni M."/>
            <person name="Cotton M."/>
            <person name="Davidson T."/>
            <person name="Desai A."/>
            <person name="Elliott G."/>
            <person name="Erb T."/>
            <person name="Fronick C."/>
            <person name="Gaige T."/>
            <person name="Haakenson W."/>
            <person name="Haglund K."/>
            <person name="Holmes A."/>
            <person name="Harkins R."/>
            <person name="Kim K."/>
            <person name="Kruchowski S.S."/>
            <person name="Strong C.M."/>
            <person name="Grewal N."/>
            <person name="Goyea E."/>
            <person name="Hou S."/>
            <person name="Levy A."/>
            <person name="Martinka S."/>
            <person name="Mead K."/>
            <person name="McLellan M.D."/>
            <person name="Meyer R."/>
            <person name="Randall-Maher J."/>
            <person name="Tomlinson C."/>
            <person name="Dauphin-Kohlberg S."/>
            <person name="Kozlowicz-Reilly A."/>
            <person name="Shah N."/>
            <person name="Swearengen-Shahid S."/>
            <person name="Snider J."/>
            <person name="Strong J.T."/>
            <person name="Thompson J."/>
            <person name="Yoakum M."/>
            <person name="Leonard S."/>
            <person name="Pearman C."/>
            <person name="Trani L."/>
            <person name="Radionenko M."/>
            <person name="Waligorski J.E."/>
            <person name="Wang C."/>
            <person name="Rock S.M."/>
            <person name="Tin-Wollam A.-M."/>
            <person name="Maupin R."/>
            <person name="Latreille P."/>
            <person name="Wendl M.C."/>
            <person name="Yang S.-P."/>
            <person name="Pohl C."/>
            <person name="Wallis J.W."/>
            <person name="Spieth J."/>
            <person name="Bieri T.A."/>
            <person name="Berkowicz N."/>
            <person name="Nelson J.O."/>
            <person name="Osborne J."/>
            <person name="Ding L."/>
            <person name="Meyer R."/>
            <person name="Sabo A."/>
            <person name="Shotland Y."/>
            <person name="Sinha P."/>
            <person name="Wohldmann P.E."/>
            <person name="Cook L.L."/>
            <person name="Hickenbotham M.T."/>
            <person name="Eldred J."/>
            <person name="Williams D."/>
            <person name="Jones T.A."/>
            <person name="She X."/>
            <person name="Ciccarelli F.D."/>
            <person name="Izaurralde E."/>
            <person name="Taylor J."/>
            <person name="Schmutz J."/>
            <person name="Myers R.M."/>
            <person name="Cox D.R."/>
            <person name="Huang X."/>
            <person name="McPherson J.D."/>
            <person name="Mardis E.R."/>
            <person name="Clifton S.W."/>
            <person name="Warren W.C."/>
            <person name="Chinwalla A.T."/>
            <person name="Eddy S.R."/>
            <person name="Marra M.A."/>
            <person name="Ovcharenko I."/>
            <person name="Furey T.S."/>
            <person name="Miller W."/>
            <person name="Eichler E.E."/>
            <person name="Bork P."/>
            <person name="Suyama M."/>
            <person name="Torrents D."/>
            <person name="Waterston R.H."/>
            <person name="Wilson R.K."/>
        </authorList>
    </citation>
    <scope>NUCLEOTIDE SEQUENCE [LARGE SCALE GENOMIC DNA]</scope>
</reference>
<reference key="3">
    <citation type="submission" date="2005-07" db="EMBL/GenBank/DDBJ databases">
        <authorList>
            <person name="Mural R.J."/>
            <person name="Istrail S."/>
            <person name="Sutton G."/>
            <person name="Florea L."/>
            <person name="Halpern A.L."/>
            <person name="Mobarry C.M."/>
            <person name="Lippert R."/>
            <person name="Walenz B."/>
            <person name="Shatkay H."/>
            <person name="Dew I."/>
            <person name="Miller J.R."/>
            <person name="Flanigan M.J."/>
            <person name="Edwards N.J."/>
            <person name="Bolanos R."/>
            <person name="Fasulo D."/>
            <person name="Halldorsson B.V."/>
            <person name="Hannenhalli S."/>
            <person name="Turner R."/>
            <person name="Yooseph S."/>
            <person name="Lu F."/>
            <person name="Nusskern D.R."/>
            <person name="Shue B.C."/>
            <person name="Zheng X.H."/>
            <person name="Zhong F."/>
            <person name="Delcher A.L."/>
            <person name="Huson D.H."/>
            <person name="Kravitz S.A."/>
            <person name="Mouchard L."/>
            <person name="Reinert K."/>
            <person name="Remington K.A."/>
            <person name="Clark A.G."/>
            <person name="Waterman M.S."/>
            <person name="Eichler E.E."/>
            <person name="Adams M.D."/>
            <person name="Hunkapiller M.W."/>
            <person name="Myers E.W."/>
            <person name="Venter J.C."/>
        </authorList>
    </citation>
    <scope>NUCLEOTIDE SEQUENCE [LARGE SCALE GENOMIC DNA]</scope>
</reference>
<reference key="4">
    <citation type="journal article" date="2004" name="Genome Res.">
        <title>The status, quality, and expansion of the NIH full-length cDNA project: the Mammalian Gene Collection (MGC).</title>
        <authorList>
            <consortium name="The MGC Project Team"/>
        </authorList>
    </citation>
    <scope>NUCLEOTIDE SEQUENCE [LARGE SCALE MRNA] (ISOFORMS 2 AND 3)</scope>
    <scope>NUCLEOTIDE SEQUENCE [LARGE SCALE MRNA] OF 307-987 (ISOFORM 4)</scope>
    <source>
        <tissue>Brain</tissue>
        <tissue>Testis</tissue>
    </source>
</reference>
<reference key="5">
    <citation type="journal article" date="2007" name="BMC Genomics">
        <title>The full-ORF clone resource of the German cDNA consortium.</title>
        <authorList>
            <person name="Bechtel S."/>
            <person name="Rosenfelder H."/>
            <person name="Duda A."/>
            <person name="Schmidt C.P."/>
            <person name="Ernst U."/>
            <person name="Wellenreuther R."/>
            <person name="Mehrle A."/>
            <person name="Schuster C."/>
            <person name="Bahr A."/>
            <person name="Bloecker H."/>
            <person name="Heubner D."/>
            <person name="Hoerlein A."/>
            <person name="Michel G."/>
            <person name="Wedler H."/>
            <person name="Koehrer K."/>
            <person name="Ottenwaelder B."/>
            <person name="Poustka A."/>
            <person name="Wiemann S."/>
            <person name="Schupp I."/>
        </authorList>
    </citation>
    <scope>NUCLEOTIDE SEQUENCE [LARGE SCALE MRNA] OF 532-987 (ISOFORM 1)</scope>
    <source>
        <tissue>Testis</tissue>
    </source>
</reference>
<reference key="6">
    <citation type="journal article" date="2009" name="Science">
        <title>Lysine acetylation targets protein complexes and co-regulates major cellular functions.</title>
        <authorList>
            <person name="Choudhary C."/>
            <person name="Kumar C."/>
            <person name="Gnad F."/>
            <person name="Nielsen M.L."/>
            <person name="Rehman M."/>
            <person name="Walther T.C."/>
            <person name="Olsen J.V."/>
            <person name="Mann M."/>
        </authorList>
    </citation>
    <scope>ACETYLATION [LARGE SCALE ANALYSIS] AT LYS-859</scope>
    <scope>IDENTIFICATION BY MASS SPECTROMETRY [LARGE SCALE ANALYSIS]</scope>
</reference>
<reference key="7">
    <citation type="journal article" date="2013" name="Int. J. Mol. Sci.">
        <title>DNA damage induced MutS homologue hMSH4 acetylation.</title>
        <authorList>
            <person name="Chu Y.L."/>
            <person name="Wu X."/>
            <person name="Xu J."/>
            <person name="Watts J.L."/>
            <person name="Her C."/>
        </authorList>
    </citation>
    <scope>ACETYLATION BY KAT8</scope>
    <scope>DEACETYLATION BY HDAC3</scope>
</reference>
<reference key="8">
    <citation type="journal article" date="2017" name="Nat. Struct. Mol. Biol.">
        <title>Site-specific mapping of the human SUMO proteome reveals co-modification with phosphorylation.</title>
        <authorList>
            <person name="Hendriks I.A."/>
            <person name="Lyon D."/>
            <person name="Young C."/>
            <person name="Jensen L.J."/>
            <person name="Vertegaal A.C."/>
            <person name="Nielsen M.L."/>
        </authorList>
    </citation>
    <scope>SUMOYLATION [LARGE SCALE ANALYSIS] AT LYS-134</scope>
    <scope>IDENTIFICATION BY MASS SPECTROMETRY [LARGE SCALE ANALYSIS]</scope>
</reference>
<dbReference type="EMBL" id="AK056911">
    <property type="protein sequence ID" value="BAB71308.1"/>
    <property type="molecule type" value="mRNA"/>
</dbReference>
<dbReference type="EMBL" id="AK074441">
    <property type="protein sequence ID" value="BAB85085.1"/>
    <property type="status" value="ALT_SEQ"/>
    <property type="molecule type" value="mRNA"/>
</dbReference>
<dbReference type="EMBL" id="AC006994">
    <property type="protein sequence ID" value="AAY14880.1"/>
    <property type="molecule type" value="Genomic_DNA"/>
</dbReference>
<dbReference type="EMBL" id="AC007038">
    <property type="protein sequence ID" value="AAX93088.1"/>
    <property type="molecule type" value="Genomic_DNA"/>
</dbReference>
<dbReference type="EMBL" id="CH471063">
    <property type="protein sequence ID" value="EAW70479.1"/>
    <property type="molecule type" value="Genomic_DNA"/>
</dbReference>
<dbReference type="EMBL" id="BC032837">
    <property type="protein sequence ID" value="AAH32837.1"/>
    <property type="molecule type" value="mRNA"/>
</dbReference>
<dbReference type="EMBL" id="BC070141">
    <property type="protein sequence ID" value="AAH70141.1"/>
    <property type="molecule type" value="mRNA"/>
</dbReference>
<dbReference type="EMBL" id="BC126155">
    <property type="protein sequence ID" value="AAI26156.1"/>
    <property type="molecule type" value="mRNA"/>
</dbReference>
<dbReference type="EMBL" id="BC143914">
    <property type="protein sequence ID" value="AAI43915.1"/>
    <property type="molecule type" value="mRNA"/>
</dbReference>
<dbReference type="EMBL" id="AL133053">
    <property type="protein sequence ID" value="CAB61379.1"/>
    <property type="molecule type" value="mRNA"/>
</dbReference>
<dbReference type="CCDS" id="CCDS33370.1">
    <molecule id="A0AUZ9-1"/>
</dbReference>
<dbReference type="CCDS" id="CCDS77519.1">
    <molecule id="A0AUZ9-2"/>
</dbReference>
<dbReference type="PIR" id="T42655">
    <property type="entry name" value="T42655"/>
</dbReference>
<dbReference type="RefSeq" id="NP_001294905.1">
    <molecule id="A0AUZ9-2"/>
    <property type="nucleotide sequence ID" value="NM_001307976.2"/>
</dbReference>
<dbReference type="RefSeq" id="NP_689732.2">
    <molecule id="A0AUZ9-1"/>
    <property type="nucleotide sequence ID" value="NM_152519.3"/>
</dbReference>
<dbReference type="RefSeq" id="XP_005246386.1">
    <molecule id="A0AUZ9-1"/>
    <property type="nucleotide sequence ID" value="XM_005246329.5"/>
</dbReference>
<dbReference type="RefSeq" id="XP_005246387.1">
    <molecule id="A0AUZ9-1"/>
    <property type="nucleotide sequence ID" value="XM_005246330.4"/>
</dbReference>
<dbReference type="RefSeq" id="XP_011509008.1">
    <molecule id="A0AUZ9-1"/>
    <property type="nucleotide sequence ID" value="XM_011510706.4"/>
</dbReference>
<dbReference type="RefSeq" id="XP_011509009.1">
    <property type="nucleotide sequence ID" value="XM_011510707.2"/>
</dbReference>
<dbReference type="RefSeq" id="XP_016858919.1">
    <molecule id="A0AUZ9-1"/>
    <property type="nucleotide sequence ID" value="XM_017003430.2"/>
</dbReference>
<dbReference type="RefSeq" id="XP_054196705.1">
    <molecule id="A0AUZ9-1"/>
    <property type="nucleotide sequence ID" value="XM_054340730.1"/>
</dbReference>
<dbReference type="RefSeq" id="XP_054196706.1">
    <molecule id="A0AUZ9-1"/>
    <property type="nucleotide sequence ID" value="XM_054340731.1"/>
</dbReference>
<dbReference type="RefSeq" id="XP_054196708.1">
    <molecule id="A0AUZ9-1"/>
    <property type="nucleotide sequence ID" value="XM_054340733.1"/>
</dbReference>
<dbReference type="RefSeq" id="XP_054196709.1">
    <molecule id="A0AUZ9-1"/>
    <property type="nucleotide sequence ID" value="XM_054340734.1"/>
</dbReference>
<dbReference type="SMR" id="A0AUZ9"/>
<dbReference type="BioGRID" id="127340">
    <property type="interactions" value="6"/>
</dbReference>
<dbReference type="FunCoup" id="A0AUZ9">
    <property type="interactions" value="162"/>
</dbReference>
<dbReference type="IntAct" id="A0AUZ9">
    <property type="interactions" value="3"/>
</dbReference>
<dbReference type="STRING" id="9606.ENSP00000281772"/>
<dbReference type="iPTMnet" id="A0AUZ9"/>
<dbReference type="PhosphoSitePlus" id="A0AUZ9"/>
<dbReference type="BioMuta" id="KANSL1L"/>
<dbReference type="jPOST" id="A0AUZ9"/>
<dbReference type="MassIVE" id="A0AUZ9"/>
<dbReference type="PaxDb" id="9606-ENSP00000281772"/>
<dbReference type="PeptideAtlas" id="A0AUZ9"/>
<dbReference type="ProteomicsDB" id="5">
    <molecule id="A0AUZ9-1"/>
</dbReference>
<dbReference type="ProteomicsDB" id="6">
    <molecule id="A0AUZ9-2"/>
</dbReference>
<dbReference type="ProteomicsDB" id="7">
    <molecule id="A0AUZ9-3"/>
</dbReference>
<dbReference type="ProteomicsDB" id="8">
    <molecule id="A0AUZ9-4"/>
</dbReference>
<dbReference type="Antibodypedia" id="63309">
    <property type="antibodies" value="31 antibodies from 12 providers"/>
</dbReference>
<dbReference type="DNASU" id="151050"/>
<dbReference type="Ensembl" id="ENST00000281772.14">
    <molecule id="A0AUZ9-1"/>
    <property type="protein sequence ID" value="ENSP00000281772.8"/>
    <property type="gene ID" value="ENSG00000144445.17"/>
</dbReference>
<dbReference type="Ensembl" id="ENST00000418791.5">
    <molecule id="A0AUZ9-2"/>
    <property type="protein sequence ID" value="ENSP00000405724.1"/>
    <property type="gene ID" value="ENSG00000144445.17"/>
</dbReference>
<dbReference type="Ensembl" id="ENST00000452086.5">
    <molecule id="A0AUZ9-3"/>
    <property type="protein sequence ID" value="ENSP00000401408.1"/>
    <property type="gene ID" value="ENSG00000144445.17"/>
</dbReference>
<dbReference type="Ensembl" id="ENST00000457374.5">
    <molecule id="A0AUZ9-3"/>
    <property type="protein sequence ID" value="ENSP00000393432.1"/>
    <property type="gene ID" value="ENSG00000144445.17"/>
</dbReference>
<dbReference type="GeneID" id="151050"/>
<dbReference type="KEGG" id="hsa:151050"/>
<dbReference type="MANE-Select" id="ENST00000281772.14">
    <property type="protein sequence ID" value="ENSP00000281772.8"/>
    <property type="RefSeq nucleotide sequence ID" value="NM_152519.4"/>
    <property type="RefSeq protein sequence ID" value="NP_689732.2"/>
</dbReference>
<dbReference type="UCSC" id="uc002vds.4">
    <molecule id="A0AUZ9-1"/>
    <property type="organism name" value="human"/>
</dbReference>
<dbReference type="AGR" id="HGNC:26310"/>
<dbReference type="CTD" id="151050"/>
<dbReference type="DisGeNET" id="151050"/>
<dbReference type="GeneCards" id="KANSL1L"/>
<dbReference type="HGNC" id="HGNC:26310">
    <property type="gene designation" value="KANSL1L"/>
</dbReference>
<dbReference type="HPA" id="ENSG00000144445">
    <property type="expression patterns" value="Tissue enriched (parathyroid)"/>
</dbReference>
<dbReference type="MIM" id="613833">
    <property type="type" value="gene"/>
</dbReference>
<dbReference type="neXtProt" id="NX_A0AUZ9"/>
<dbReference type="OpenTargets" id="ENSG00000144445"/>
<dbReference type="PharmGKB" id="PA162379439"/>
<dbReference type="VEuPathDB" id="HostDB:ENSG00000144445"/>
<dbReference type="eggNOG" id="ENOG502QRI7">
    <property type="taxonomic scope" value="Eukaryota"/>
</dbReference>
<dbReference type="GeneTree" id="ENSGT00530000063688"/>
<dbReference type="HOGENOM" id="CLU_011035_1_0_1"/>
<dbReference type="InParanoid" id="A0AUZ9"/>
<dbReference type="OMA" id="WRVVDIQ"/>
<dbReference type="OrthoDB" id="6022640at2759"/>
<dbReference type="PAN-GO" id="A0AUZ9">
    <property type="GO annotations" value="2 GO annotations based on evolutionary models"/>
</dbReference>
<dbReference type="PhylomeDB" id="A0AUZ9"/>
<dbReference type="TreeFam" id="TF336511"/>
<dbReference type="PathwayCommons" id="A0AUZ9"/>
<dbReference type="SignaLink" id="A0AUZ9"/>
<dbReference type="BioGRID-ORCS" id="151050">
    <property type="hits" value="12 hits in 1161 CRISPR screens"/>
</dbReference>
<dbReference type="ChiTaRS" id="KANSL1L">
    <property type="organism name" value="human"/>
</dbReference>
<dbReference type="GenomeRNAi" id="151050"/>
<dbReference type="Pharos" id="A0AUZ9">
    <property type="development level" value="Tdark"/>
</dbReference>
<dbReference type="PRO" id="PR:A0AUZ9"/>
<dbReference type="Proteomes" id="UP000005640">
    <property type="component" value="Chromosome 2"/>
</dbReference>
<dbReference type="RNAct" id="A0AUZ9">
    <property type="molecule type" value="protein"/>
</dbReference>
<dbReference type="Bgee" id="ENSG00000144445">
    <property type="expression patterns" value="Expressed in calcaneal tendon and 178 other cell types or tissues"/>
</dbReference>
<dbReference type="ExpressionAtlas" id="A0AUZ9">
    <property type="expression patterns" value="baseline and differential"/>
</dbReference>
<dbReference type="GO" id="GO:0043231">
    <property type="term" value="C:intracellular membrane-bounded organelle"/>
    <property type="evidence" value="ECO:0007669"/>
    <property type="project" value="UniProtKB-ARBA"/>
</dbReference>
<dbReference type="GO" id="GO:0044545">
    <property type="term" value="C:NSL complex"/>
    <property type="evidence" value="ECO:0000318"/>
    <property type="project" value="GO_Central"/>
</dbReference>
<dbReference type="GO" id="GO:0035035">
    <property type="term" value="F:histone acetyltransferase binding"/>
    <property type="evidence" value="ECO:0000318"/>
    <property type="project" value="GO_Central"/>
</dbReference>
<dbReference type="Gene3D" id="6.10.250.3170">
    <property type="match status" value="1"/>
</dbReference>
<dbReference type="InterPro" id="IPR026180">
    <property type="entry name" value="NSL1"/>
</dbReference>
<dbReference type="InterPro" id="IPR029332">
    <property type="entry name" value="PEHE_dom"/>
</dbReference>
<dbReference type="PANTHER" id="PTHR22443:SF16">
    <property type="entry name" value="KAT8 REGULATORY NSL COMPLEX SUBUNIT 1-LIKE PROTEIN"/>
    <property type="match status" value="1"/>
</dbReference>
<dbReference type="PANTHER" id="PTHR22443">
    <property type="entry name" value="NON-SPECIFIC LETHAL 1, ISOFORM M"/>
    <property type="match status" value="1"/>
</dbReference>
<dbReference type="Pfam" id="PF15275">
    <property type="entry name" value="PEHE"/>
    <property type="match status" value="1"/>
</dbReference>
<dbReference type="SMART" id="SM01300">
    <property type="entry name" value="PEHE"/>
    <property type="match status" value="1"/>
</dbReference>
<dbReference type="PROSITE" id="PS52052">
    <property type="entry name" value="PEHE"/>
    <property type="match status" value="1"/>
</dbReference>